<protein>
    <recommendedName>
        <fullName>Integrator complex subunit 2</fullName>
        <shortName>Int2</shortName>
    </recommendedName>
</protein>
<proteinExistence type="evidence at transcript level"/>
<reference key="1">
    <citation type="journal article" date="2005" name="Genome Biol.">
        <title>Full-length cDNAs from chicken bursal lymphocytes to facilitate gene function analysis.</title>
        <authorList>
            <person name="Caldwell R.B."/>
            <person name="Kierzek A.M."/>
            <person name="Arakawa H."/>
            <person name="Bezzubov Y."/>
            <person name="Zaim J."/>
            <person name="Fiedler P."/>
            <person name="Kutter S."/>
            <person name="Blagodatski A."/>
            <person name="Kostovska D."/>
            <person name="Koter M."/>
            <person name="Plachy J."/>
            <person name="Carninci P."/>
            <person name="Hayashizaki Y."/>
            <person name="Buerstedde J.-M."/>
        </authorList>
    </citation>
    <scope>NUCLEOTIDE SEQUENCE [LARGE SCALE MRNA]</scope>
    <source>
        <strain>CB</strain>
        <tissue>Bursa of Fabricius</tissue>
    </source>
</reference>
<comment type="function">
    <text evidence="1">Component of the integrator complex, a multiprotein complex that terminates RNA polymerase II (Pol II) transcription in the promoter-proximal region of genes. The integrator complex provides a quality checkpoint during transcription elongation by driving premature transcription termination of transcripts that are unfavorably configured for transcriptional elongation: the complex terminates transcription by (1) catalyzing dephosphorylation of the C-terminal domain (CTD) of Pol II subunit POLR2A/RPB1 and SUPT5H/SPT5, (2) degrading the exiting nascent RNA transcript via endonuclease activity and (3) promoting the release of Pol II from bound DNA. The integrator complex is also involved in terminating the synthesis of non-coding Pol II transcripts, such as enhancer RNAs (eRNAs), small nuclear RNAs (snRNAs), telomerase RNAs and long non-coding RNAs (lncRNAs).</text>
</comment>
<comment type="subunit">
    <text evidence="1">Component of the Integrator complex, composed of core subunits INTS1, INTS2, INTS3, INTS4, INTS5, INTS6, INTS7, INTS8, INTS9/RC74, INTS10, INTS11/CPSF3L, INTS12, INTS13, INTS14 and INTS15. The core complex associates with protein phosphatase 2A subunits PPP2CA and PPP2R1A, to form the Integrator-PP2A (INTAC) complex.</text>
</comment>
<comment type="subcellular location">
    <subcellularLocation>
        <location evidence="1">Nucleus</location>
    </subcellularLocation>
    <subcellularLocation>
        <location evidence="1">Nucleus membrane</location>
        <topology evidence="2">Single-pass membrane protein</topology>
    </subcellularLocation>
    <subcellularLocation>
        <location evidence="1">Cytoplasm</location>
    </subcellularLocation>
</comment>
<comment type="similarity">
    <text evidence="3">Belongs to the Integrator subunit 2 family.</text>
</comment>
<accession>Q5ZKU4</accession>
<dbReference type="EMBL" id="AJ719990">
    <property type="protein sequence ID" value="CAG31649.1"/>
    <property type="molecule type" value="mRNA"/>
</dbReference>
<dbReference type="RefSeq" id="NP_001025893.1">
    <property type="nucleotide sequence ID" value="NM_001030722.1"/>
</dbReference>
<dbReference type="SMR" id="Q5ZKU4"/>
<dbReference type="FunCoup" id="Q5ZKU4">
    <property type="interactions" value="3557"/>
</dbReference>
<dbReference type="STRING" id="9031.ENSGALP00000008442"/>
<dbReference type="GlyGen" id="Q5ZKU4">
    <property type="glycosylation" value="1 site"/>
</dbReference>
<dbReference type="PaxDb" id="9031-ENSGALP00000008442"/>
<dbReference type="GeneID" id="417640"/>
<dbReference type="KEGG" id="gga:417640"/>
<dbReference type="CTD" id="57508"/>
<dbReference type="VEuPathDB" id="HostDB:geneid_417640"/>
<dbReference type="eggNOG" id="ENOG502QSP2">
    <property type="taxonomic scope" value="Eukaryota"/>
</dbReference>
<dbReference type="InParanoid" id="Q5ZKU4"/>
<dbReference type="OrthoDB" id="70899at2759"/>
<dbReference type="PhylomeDB" id="Q5ZKU4"/>
<dbReference type="PRO" id="PR:Q5ZKU4"/>
<dbReference type="Proteomes" id="UP000000539">
    <property type="component" value="Unassembled WGS sequence"/>
</dbReference>
<dbReference type="GO" id="GO:0005737">
    <property type="term" value="C:cytoplasm"/>
    <property type="evidence" value="ECO:0007669"/>
    <property type="project" value="UniProtKB-SubCell"/>
</dbReference>
<dbReference type="GO" id="GO:0160232">
    <property type="term" value="C:INTAC complex"/>
    <property type="evidence" value="ECO:0000250"/>
    <property type="project" value="UniProtKB"/>
</dbReference>
<dbReference type="GO" id="GO:0032039">
    <property type="term" value="C:integrator complex"/>
    <property type="evidence" value="ECO:0000318"/>
    <property type="project" value="GO_Central"/>
</dbReference>
<dbReference type="GO" id="GO:0031965">
    <property type="term" value="C:nuclear membrane"/>
    <property type="evidence" value="ECO:0007669"/>
    <property type="project" value="UniProtKB-SubCell"/>
</dbReference>
<dbReference type="GO" id="GO:0160240">
    <property type="term" value="P:RNA polymerase II transcription initiation surveillance"/>
    <property type="evidence" value="ECO:0000250"/>
    <property type="project" value="UniProtKB"/>
</dbReference>
<dbReference type="GO" id="GO:0034472">
    <property type="term" value="P:snRNA 3'-end processing"/>
    <property type="evidence" value="ECO:0000318"/>
    <property type="project" value="GO_Central"/>
</dbReference>
<dbReference type="InterPro" id="IPR026236">
    <property type="entry name" value="Int2_metazoa"/>
</dbReference>
<dbReference type="InterPro" id="IPR029321">
    <property type="entry name" value="INTS2"/>
</dbReference>
<dbReference type="PANTHER" id="PTHR28608">
    <property type="entry name" value="INTEGRATOR COMPLEX SUBUNIT 2"/>
    <property type="match status" value="1"/>
</dbReference>
<dbReference type="PANTHER" id="PTHR28608:SF1">
    <property type="entry name" value="INTEGRATOR COMPLEX SUBUNIT 2"/>
    <property type="match status" value="1"/>
</dbReference>
<dbReference type="Pfam" id="PF14750">
    <property type="entry name" value="INTS2"/>
    <property type="match status" value="1"/>
</dbReference>
<dbReference type="PRINTS" id="PR02105">
    <property type="entry name" value="INTSUBUNIT2"/>
</dbReference>
<name>INT2_CHICK</name>
<organism>
    <name type="scientific">Gallus gallus</name>
    <name type="common">Chicken</name>
    <dbReference type="NCBI Taxonomy" id="9031"/>
    <lineage>
        <taxon>Eukaryota</taxon>
        <taxon>Metazoa</taxon>
        <taxon>Chordata</taxon>
        <taxon>Craniata</taxon>
        <taxon>Vertebrata</taxon>
        <taxon>Euteleostomi</taxon>
        <taxon>Archelosauria</taxon>
        <taxon>Archosauria</taxon>
        <taxon>Dinosauria</taxon>
        <taxon>Saurischia</taxon>
        <taxon>Theropoda</taxon>
        <taxon>Coelurosauria</taxon>
        <taxon>Aves</taxon>
        <taxon>Neognathae</taxon>
        <taxon>Galloanserae</taxon>
        <taxon>Galliformes</taxon>
        <taxon>Phasianidae</taxon>
        <taxon>Phasianinae</taxon>
        <taxon>Gallus</taxon>
    </lineage>
</organism>
<keyword id="KW-0963">Cytoplasm</keyword>
<keyword id="KW-0472">Membrane</keyword>
<keyword id="KW-0539">Nucleus</keyword>
<keyword id="KW-1185">Reference proteome</keyword>
<keyword id="KW-0812">Transmembrane</keyword>
<keyword id="KW-1133">Transmembrane helix</keyword>
<evidence type="ECO:0000250" key="1">
    <source>
        <dbReference type="UniProtKB" id="Q9H0H0"/>
    </source>
</evidence>
<evidence type="ECO:0000255" key="2"/>
<evidence type="ECO:0000305" key="3"/>
<sequence>MAECSGLQFVSPYAFEAMQKVDVVRLAALSDPELRLLLPCLVRMALCAPADQSQSWAQDKKLILRLLSGVEAVNSIVALLSVDFHALEQDASKEQQLRHKLGGGSGESILVSQLQHGLTLEFEHSDSPRRLRLVLSELLAIMNKVSESNGEFFLKSSELFESPVYLEEAADVLCILQAELPSLLPIVDVAEALLHVKNGAWFLCLLVANVPDSFNEVCRGLIKNGERQDEESVGGRRRTEALRHLCKMNPSQALRVRGMVVEECHLPGLGVALTLDHTKNESSDDGVSDLVCFVSGLLLGTNAKVRTWFGTFIRNGQQRKRDNISSVLWQMRRQLLLELMGILPTVRSTHIVEEADVDTEPNVSVYSGLKEEHVVKASALLRLYCALMGIAGLKPTDEEAEQLLQLMTSRPPATPAGVRFVSLSFCMLLAFSTLVSTPEQEQLMVMWLSWMIKEEAYFESISGVSASFGEMLLLVAMYFHSNQLSAIIDLVCSTLGMKIVIKPSSLSRMKTIFTQEIFTEQVVTAHAVRVPVTGSLSANITGFLPIHCIYQLLRSRSFTKHKVSIKDWIYRQLCETTTPLHPQLLPLIDVYINSILTPASKSNPEATNQPVTEQEILNVFQGLTGGENTRPAQRYSITTQLLVLYYVLSYEEALLANTKILAAMQRKPKSYSSALMDQIPIKYLIRQAQGLQQELGGLHSALLRLLATNYPHLCIVEDWICEEQITGTDALLRRMLLTTIAKNHSPKQLQEAFSMLPGNHTQLMQILEHLTLLSAGELIPYAEVLTSNMNCLLNAGVPRRILQTVNKLWMVLNTVMPRRLWVMTVNALQPSVKIVRQQKYTQNDLMIDPLIVLRCDQRVHRSPPLMDITLHMLNGYLLASKAYLNAHLKETAEQDIRPSQNNAMGPETPEVTREELKNALLAAQDSAAVQILLEICLPTEEEKAQSSSTYSLLKSVQSTTSPKSSDVEEEEDSLLCNLREVQCLICCLLHQMYIADPNIVKLVHFQGYPCELLALTVAGIPSMHICLDFIPELIAQPELEKQIFAIQLLSFLCIQYALPKSLSVARLAINVMGTLLTVLTQSKRYAFFMPTLPCLVSFCQAFPPLYEDIMSLLIQIGQVCASDVATQTRDFDPIITRLQQLKERPNEVSGLCKDSPYKSCSRDITSVDPDVQLCQCVESTIIEIINMSVSGV</sequence>
<feature type="chain" id="PRO_0000236101" description="Integrator complex subunit 2">
    <location>
        <begin position="1"/>
        <end position="1192"/>
    </location>
</feature>
<feature type="transmembrane region" description="Helical" evidence="2">
    <location>
        <begin position="420"/>
        <end position="436"/>
    </location>
</feature>
<gene>
    <name type="primary">INTS2</name>
    <name type="ORF">RCJMB04_9c3</name>
</gene>